<comment type="subcellular location">
    <subcellularLocation>
        <location evidence="1">Membrane</location>
        <topology evidence="1">Multi-pass membrane protein</topology>
    </subcellularLocation>
</comment>
<comment type="miscellaneous">
    <text evidence="2">Partially overlaps DNF1.</text>
</comment>
<comment type="caution">
    <text evidence="3">Product of a dubious gene prediction unlikely to encode a functional protein. Because of that it is not part of the S.cerevisiae S288c complete/reference proteome set.</text>
</comment>
<reference key="1">
    <citation type="journal article" date="1997" name="Nature">
        <title>The nucleotide sequence of Saccharomyces cerevisiae chromosome V.</title>
        <authorList>
            <person name="Dietrich F.S."/>
            <person name="Mulligan J.T."/>
            <person name="Hennessy K.M."/>
            <person name="Yelton M.A."/>
            <person name="Allen E."/>
            <person name="Araujo R."/>
            <person name="Aviles E."/>
            <person name="Berno A."/>
            <person name="Brennan T."/>
            <person name="Carpenter J."/>
            <person name="Chen E."/>
            <person name="Cherry J.M."/>
            <person name="Chung E."/>
            <person name="Duncan M."/>
            <person name="Guzman E."/>
            <person name="Hartzell G."/>
            <person name="Hunicke-Smith S."/>
            <person name="Hyman R.W."/>
            <person name="Kayser A."/>
            <person name="Komp C."/>
            <person name="Lashkari D."/>
            <person name="Lew H."/>
            <person name="Lin D."/>
            <person name="Mosedale D."/>
            <person name="Nakahara K."/>
            <person name="Namath A."/>
            <person name="Norgren R."/>
            <person name="Oefner P."/>
            <person name="Oh C."/>
            <person name="Petel F.X."/>
            <person name="Roberts D."/>
            <person name="Sehl P."/>
            <person name="Schramm S."/>
            <person name="Shogren T."/>
            <person name="Smith V."/>
            <person name="Taylor P."/>
            <person name="Wei Y."/>
            <person name="Botstein D."/>
            <person name="Davis R.W."/>
        </authorList>
    </citation>
    <scope>NUCLEOTIDE SEQUENCE [LARGE SCALE GENOMIC DNA]</scope>
    <source>
        <strain>ATCC 204508 / S288c</strain>
    </source>
</reference>
<reference key="2">
    <citation type="journal article" date="2014" name="G3 (Bethesda)">
        <title>The reference genome sequence of Saccharomyces cerevisiae: Then and now.</title>
        <authorList>
            <person name="Engel S.R."/>
            <person name="Dietrich F.S."/>
            <person name="Fisk D.G."/>
            <person name="Binkley G."/>
            <person name="Balakrishnan R."/>
            <person name="Costanzo M.C."/>
            <person name="Dwight S.S."/>
            <person name="Hitz B.C."/>
            <person name="Karra K."/>
            <person name="Nash R.S."/>
            <person name="Weng S."/>
            <person name="Wong E.D."/>
            <person name="Lloyd P."/>
            <person name="Skrzypek M.S."/>
            <person name="Miyasato S.R."/>
            <person name="Simison M."/>
            <person name="Cherry J.M."/>
        </authorList>
    </citation>
    <scope>GENOME REANNOTATION</scope>
    <source>
        <strain>ATCC 204508 / S288c</strain>
    </source>
</reference>
<feature type="chain" id="PRO_0000431005" description="Putative uncharacterized membrane protein YER165C-A">
    <location>
        <begin position="1"/>
        <end position="118"/>
    </location>
</feature>
<feature type="transmembrane region" description="Helical; Name=1" evidence="1">
    <location>
        <begin position="7"/>
        <end position="27"/>
    </location>
</feature>
<feature type="transmembrane region" description="Helical; Name=2" evidence="1">
    <location>
        <begin position="34"/>
        <end position="58"/>
    </location>
</feature>
<accession>A0A023PZH1</accession>
<dbReference type="EMBL" id="KJ412244">
    <property type="protein sequence ID" value="AHX39287.1"/>
    <property type="molecule type" value="Genomic_DNA"/>
</dbReference>
<dbReference type="PaxDb" id="4932-YER165C-A"/>
<dbReference type="EnsemblFungi" id="YER165C-A_mRNA">
    <property type="protein sequence ID" value="YER165C-A"/>
    <property type="gene ID" value="YER165C-A"/>
</dbReference>
<dbReference type="AGR" id="SGD:S000028762"/>
<dbReference type="SGD" id="S000028762">
    <property type="gene designation" value="YER165C-A"/>
</dbReference>
<dbReference type="HOGENOM" id="CLU_2074988_0_0_1"/>
<dbReference type="GO" id="GO:0016020">
    <property type="term" value="C:membrane"/>
    <property type="evidence" value="ECO:0007669"/>
    <property type="project" value="UniProtKB-SubCell"/>
</dbReference>
<sequence>MIVIFCVIVKCEFFCIFTFIFGCFIIEADLWPAVFVACCTIIKMGRCNMCIFITAIIFKLKCIFKGRHGSMPIAMKSSRHNYQLTFLFKVNCVFISLPGGNKGFLLRLLSLAQPPVNF</sequence>
<proteinExistence type="uncertain"/>
<protein>
    <recommendedName>
        <fullName evidence="2">Putative uncharacterized membrane protein YER165C-A</fullName>
    </recommendedName>
</protein>
<keyword id="KW-0472">Membrane</keyword>
<keyword id="KW-0812">Transmembrane</keyword>
<keyword id="KW-1133">Transmembrane helix</keyword>
<gene>
    <name evidence="4" type="ordered locus">YER165C-A</name>
</gene>
<evidence type="ECO:0000255" key="1"/>
<evidence type="ECO:0000305" key="2"/>
<evidence type="ECO:0000305" key="3">
    <source>
    </source>
</evidence>
<evidence type="ECO:0000312" key="4">
    <source>
        <dbReference type="SGD" id="S000028762"/>
    </source>
</evidence>
<name>YE165_YEAST</name>
<organism>
    <name type="scientific">Saccharomyces cerevisiae (strain ATCC 204508 / S288c)</name>
    <name type="common">Baker's yeast</name>
    <dbReference type="NCBI Taxonomy" id="559292"/>
    <lineage>
        <taxon>Eukaryota</taxon>
        <taxon>Fungi</taxon>
        <taxon>Dikarya</taxon>
        <taxon>Ascomycota</taxon>
        <taxon>Saccharomycotina</taxon>
        <taxon>Saccharomycetes</taxon>
        <taxon>Saccharomycetales</taxon>
        <taxon>Saccharomycetaceae</taxon>
        <taxon>Saccharomyces</taxon>
    </lineage>
</organism>